<keyword id="KW-0963">Cytoplasm</keyword>
<keyword id="KW-0342">GTP-binding</keyword>
<keyword id="KW-0436">Ligase</keyword>
<keyword id="KW-0460">Magnesium</keyword>
<keyword id="KW-0479">Metal-binding</keyword>
<keyword id="KW-0547">Nucleotide-binding</keyword>
<keyword id="KW-0658">Purine biosynthesis</keyword>
<accession>C4ZR54</accession>
<comment type="function">
    <text evidence="1">Plays an important role in the de novo pathway of purine nucleotide biosynthesis. Catalyzes the first committed step in the biosynthesis of AMP from IMP.</text>
</comment>
<comment type="catalytic activity">
    <reaction evidence="1">
        <text>IMP + L-aspartate + GTP = N(6)-(1,2-dicarboxyethyl)-AMP + GDP + phosphate + 2 H(+)</text>
        <dbReference type="Rhea" id="RHEA:15753"/>
        <dbReference type="ChEBI" id="CHEBI:15378"/>
        <dbReference type="ChEBI" id="CHEBI:29991"/>
        <dbReference type="ChEBI" id="CHEBI:37565"/>
        <dbReference type="ChEBI" id="CHEBI:43474"/>
        <dbReference type="ChEBI" id="CHEBI:57567"/>
        <dbReference type="ChEBI" id="CHEBI:58053"/>
        <dbReference type="ChEBI" id="CHEBI:58189"/>
        <dbReference type="EC" id="6.3.4.4"/>
    </reaction>
</comment>
<comment type="cofactor">
    <cofactor evidence="1">
        <name>Mg(2+)</name>
        <dbReference type="ChEBI" id="CHEBI:18420"/>
    </cofactor>
    <text evidence="1">Binds 1 Mg(2+) ion per subunit.</text>
</comment>
<comment type="pathway">
    <text evidence="1">Purine metabolism; AMP biosynthesis via de novo pathway; AMP from IMP: step 1/2.</text>
</comment>
<comment type="subunit">
    <text evidence="1">Homodimer.</text>
</comment>
<comment type="subcellular location">
    <subcellularLocation>
        <location evidence="1">Cytoplasm</location>
    </subcellularLocation>
</comment>
<comment type="similarity">
    <text evidence="1">Belongs to the adenylosuccinate synthetase family.</text>
</comment>
<sequence length="432" mass="47345">MGNNVVVLGTQWGDEGKGKIVDLLTERAKYVVRYQGGHNAGHTLVINGEKTVLHLIPSGILRENVTSIIGNGVVLSPAALMKEMKELEDRGIPVRERLLLSEACPLILDYHVALDNAREKARGAKAIGTTGRGIGPAYEDKVARRGLRVGDLFDKETFAEKLKEVMEYHNFQLVNYYKAEAVDYQKVLDDTMAVADILTSMVVDVSDLLDQARQRGDFVMFEGAQGTLLDIDHGTYPYVTSSNTTAGGVATGSGLGPRYVDYVLGILKAYSTRVGAGPFPTELFDETGEFLCKQGNEFGATTGRRRRTGWLDTVAVRRAVQLNSLSGFCLTKLDVLDGLKEVKLCVAYRMPDGREVTTTPLAADDWKGVEPIYETMPGWSESTFGVKDRSGLPQAALNYIKRIEELTGVPIDIISTGPDRTETMILRDPFDA</sequence>
<feature type="chain" id="PRO_1000201755" description="Adenylosuccinate synthetase">
    <location>
        <begin position="1"/>
        <end position="432"/>
    </location>
</feature>
<feature type="active site" description="Proton acceptor" evidence="1">
    <location>
        <position position="14"/>
    </location>
</feature>
<feature type="active site" description="Proton donor" evidence="1">
    <location>
        <position position="42"/>
    </location>
</feature>
<feature type="binding site" evidence="1">
    <location>
        <begin position="13"/>
        <end position="19"/>
    </location>
    <ligand>
        <name>GTP</name>
        <dbReference type="ChEBI" id="CHEBI:37565"/>
    </ligand>
</feature>
<feature type="binding site" description="in other chain" evidence="1">
    <location>
        <begin position="14"/>
        <end position="17"/>
    </location>
    <ligand>
        <name>IMP</name>
        <dbReference type="ChEBI" id="CHEBI:58053"/>
        <note>ligand shared between dimeric partners</note>
    </ligand>
</feature>
<feature type="binding site" evidence="1">
    <location>
        <position position="14"/>
    </location>
    <ligand>
        <name>Mg(2+)</name>
        <dbReference type="ChEBI" id="CHEBI:18420"/>
    </ligand>
</feature>
<feature type="binding site" description="in other chain" evidence="1">
    <location>
        <begin position="39"/>
        <end position="42"/>
    </location>
    <ligand>
        <name>IMP</name>
        <dbReference type="ChEBI" id="CHEBI:58053"/>
        <note>ligand shared between dimeric partners</note>
    </ligand>
</feature>
<feature type="binding site" evidence="1">
    <location>
        <begin position="41"/>
        <end position="43"/>
    </location>
    <ligand>
        <name>GTP</name>
        <dbReference type="ChEBI" id="CHEBI:37565"/>
    </ligand>
</feature>
<feature type="binding site" evidence="1">
    <location>
        <position position="41"/>
    </location>
    <ligand>
        <name>Mg(2+)</name>
        <dbReference type="ChEBI" id="CHEBI:18420"/>
    </ligand>
</feature>
<feature type="binding site" description="in other chain" evidence="1">
    <location>
        <position position="130"/>
    </location>
    <ligand>
        <name>IMP</name>
        <dbReference type="ChEBI" id="CHEBI:58053"/>
        <note>ligand shared between dimeric partners</note>
    </ligand>
</feature>
<feature type="binding site" evidence="1">
    <location>
        <position position="144"/>
    </location>
    <ligand>
        <name>IMP</name>
        <dbReference type="ChEBI" id="CHEBI:58053"/>
        <note>ligand shared between dimeric partners</note>
    </ligand>
</feature>
<feature type="binding site" description="in other chain" evidence="1">
    <location>
        <position position="225"/>
    </location>
    <ligand>
        <name>IMP</name>
        <dbReference type="ChEBI" id="CHEBI:58053"/>
        <note>ligand shared between dimeric partners</note>
    </ligand>
</feature>
<feature type="binding site" description="in other chain" evidence="1">
    <location>
        <position position="240"/>
    </location>
    <ligand>
        <name>IMP</name>
        <dbReference type="ChEBI" id="CHEBI:58053"/>
        <note>ligand shared between dimeric partners</note>
    </ligand>
</feature>
<feature type="binding site" evidence="1">
    <location>
        <begin position="300"/>
        <end position="306"/>
    </location>
    <ligand>
        <name>substrate</name>
    </ligand>
</feature>
<feature type="binding site" description="in other chain" evidence="1">
    <location>
        <position position="304"/>
    </location>
    <ligand>
        <name>IMP</name>
        <dbReference type="ChEBI" id="CHEBI:58053"/>
        <note>ligand shared between dimeric partners</note>
    </ligand>
</feature>
<feature type="binding site" evidence="1">
    <location>
        <position position="306"/>
    </location>
    <ligand>
        <name>GTP</name>
        <dbReference type="ChEBI" id="CHEBI:37565"/>
    </ligand>
</feature>
<feature type="binding site" evidence="1">
    <location>
        <begin position="332"/>
        <end position="334"/>
    </location>
    <ligand>
        <name>GTP</name>
        <dbReference type="ChEBI" id="CHEBI:37565"/>
    </ligand>
</feature>
<feature type="binding site" evidence="1">
    <location>
        <begin position="415"/>
        <end position="417"/>
    </location>
    <ligand>
        <name>GTP</name>
        <dbReference type="ChEBI" id="CHEBI:37565"/>
    </ligand>
</feature>
<evidence type="ECO:0000255" key="1">
    <source>
        <dbReference type="HAMAP-Rule" id="MF_00011"/>
    </source>
</evidence>
<protein>
    <recommendedName>
        <fullName evidence="1">Adenylosuccinate synthetase</fullName>
        <shortName evidence="1">AMPSase</shortName>
        <shortName evidence="1">AdSS</shortName>
        <ecNumber evidence="1">6.3.4.4</ecNumber>
    </recommendedName>
    <alternativeName>
        <fullName evidence="1">IMP--aspartate ligase</fullName>
    </alternativeName>
</protein>
<dbReference type="EC" id="6.3.4.4" evidence="1"/>
<dbReference type="EMBL" id="CP001396">
    <property type="protein sequence ID" value="ACR61934.1"/>
    <property type="molecule type" value="Genomic_DNA"/>
</dbReference>
<dbReference type="RefSeq" id="WP_000527955.1">
    <property type="nucleotide sequence ID" value="NC_012759.1"/>
</dbReference>
<dbReference type="SMR" id="C4ZR54"/>
<dbReference type="GeneID" id="75202411"/>
<dbReference type="KEGG" id="ebw:BWG_3889"/>
<dbReference type="HOGENOM" id="CLU_029848_0_0_6"/>
<dbReference type="UniPathway" id="UPA00075">
    <property type="reaction ID" value="UER00335"/>
</dbReference>
<dbReference type="GO" id="GO:0005737">
    <property type="term" value="C:cytoplasm"/>
    <property type="evidence" value="ECO:0007669"/>
    <property type="project" value="UniProtKB-SubCell"/>
</dbReference>
<dbReference type="GO" id="GO:0004019">
    <property type="term" value="F:adenylosuccinate synthase activity"/>
    <property type="evidence" value="ECO:0007669"/>
    <property type="project" value="UniProtKB-UniRule"/>
</dbReference>
<dbReference type="GO" id="GO:0005525">
    <property type="term" value="F:GTP binding"/>
    <property type="evidence" value="ECO:0007669"/>
    <property type="project" value="UniProtKB-UniRule"/>
</dbReference>
<dbReference type="GO" id="GO:0000287">
    <property type="term" value="F:magnesium ion binding"/>
    <property type="evidence" value="ECO:0007669"/>
    <property type="project" value="UniProtKB-UniRule"/>
</dbReference>
<dbReference type="GO" id="GO:0044208">
    <property type="term" value="P:'de novo' AMP biosynthetic process"/>
    <property type="evidence" value="ECO:0007669"/>
    <property type="project" value="UniProtKB-UniRule"/>
</dbReference>
<dbReference type="GO" id="GO:0046040">
    <property type="term" value="P:IMP metabolic process"/>
    <property type="evidence" value="ECO:0007669"/>
    <property type="project" value="TreeGrafter"/>
</dbReference>
<dbReference type="CDD" id="cd03108">
    <property type="entry name" value="AdSS"/>
    <property type="match status" value="1"/>
</dbReference>
<dbReference type="FunFam" id="1.10.300.10:FF:000001">
    <property type="entry name" value="Adenylosuccinate synthetase"/>
    <property type="match status" value="1"/>
</dbReference>
<dbReference type="FunFam" id="3.90.170.10:FF:000001">
    <property type="entry name" value="Adenylosuccinate synthetase"/>
    <property type="match status" value="1"/>
</dbReference>
<dbReference type="Gene3D" id="3.40.440.10">
    <property type="entry name" value="Adenylosuccinate Synthetase, subunit A, domain 1"/>
    <property type="match status" value="1"/>
</dbReference>
<dbReference type="Gene3D" id="1.10.300.10">
    <property type="entry name" value="Adenylosuccinate Synthetase, subunit A, domain 2"/>
    <property type="match status" value="1"/>
</dbReference>
<dbReference type="Gene3D" id="3.90.170.10">
    <property type="entry name" value="Adenylosuccinate Synthetase, subunit A, domain 3"/>
    <property type="match status" value="1"/>
</dbReference>
<dbReference type="HAMAP" id="MF_00011">
    <property type="entry name" value="Adenylosucc_synth"/>
    <property type="match status" value="1"/>
</dbReference>
<dbReference type="InterPro" id="IPR018220">
    <property type="entry name" value="Adenylosuccin_syn_GTP-bd"/>
</dbReference>
<dbReference type="InterPro" id="IPR033128">
    <property type="entry name" value="Adenylosuccin_syn_Lys_AS"/>
</dbReference>
<dbReference type="InterPro" id="IPR042109">
    <property type="entry name" value="Adenylosuccinate_synth_dom1"/>
</dbReference>
<dbReference type="InterPro" id="IPR042110">
    <property type="entry name" value="Adenylosuccinate_synth_dom2"/>
</dbReference>
<dbReference type="InterPro" id="IPR042111">
    <property type="entry name" value="Adenylosuccinate_synth_dom3"/>
</dbReference>
<dbReference type="InterPro" id="IPR001114">
    <property type="entry name" value="Adenylosuccinate_synthetase"/>
</dbReference>
<dbReference type="InterPro" id="IPR027417">
    <property type="entry name" value="P-loop_NTPase"/>
</dbReference>
<dbReference type="NCBIfam" id="NF002223">
    <property type="entry name" value="PRK01117.1"/>
    <property type="match status" value="1"/>
</dbReference>
<dbReference type="NCBIfam" id="TIGR00184">
    <property type="entry name" value="purA"/>
    <property type="match status" value="1"/>
</dbReference>
<dbReference type="PANTHER" id="PTHR11846">
    <property type="entry name" value="ADENYLOSUCCINATE SYNTHETASE"/>
    <property type="match status" value="1"/>
</dbReference>
<dbReference type="PANTHER" id="PTHR11846:SF0">
    <property type="entry name" value="ADENYLOSUCCINATE SYNTHETASE"/>
    <property type="match status" value="1"/>
</dbReference>
<dbReference type="Pfam" id="PF00709">
    <property type="entry name" value="Adenylsucc_synt"/>
    <property type="match status" value="1"/>
</dbReference>
<dbReference type="SMART" id="SM00788">
    <property type="entry name" value="Adenylsucc_synt"/>
    <property type="match status" value="1"/>
</dbReference>
<dbReference type="SUPFAM" id="SSF52540">
    <property type="entry name" value="P-loop containing nucleoside triphosphate hydrolases"/>
    <property type="match status" value="1"/>
</dbReference>
<dbReference type="PROSITE" id="PS01266">
    <property type="entry name" value="ADENYLOSUCCIN_SYN_1"/>
    <property type="match status" value="1"/>
</dbReference>
<dbReference type="PROSITE" id="PS00513">
    <property type="entry name" value="ADENYLOSUCCIN_SYN_2"/>
    <property type="match status" value="1"/>
</dbReference>
<name>PURA_ECOBW</name>
<reference key="1">
    <citation type="journal article" date="2009" name="J. Bacteriol.">
        <title>Genomic sequencing reveals regulatory mutations and recombinational events in the widely used MC4100 lineage of Escherichia coli K-12.</title>
        <authorList>
            <person name="Ferenci T."/>
            <person name="Zhou Z."/>
            <person name="Betteridge T."/>
            <person name="Ren Y."/>
            <person name="Liu Y."/>
            <person name="Feng L."/>
            <person name="Reeves P.R."/>
            <person name="Wang L."/>
        </authorList>
    </citation>
    <scope>NUCLEOTIDE SEQUENCE [LARGE SCALE GENOMIC DNA]</scope>
    <source>
        <strain>K12 / MC4100 / BW2952</strain>
    </source>
</reference>
<organism>
    <name type="scientific">Escherichia coli (strain K12 / MC4100 / BW2952)</name>
    <dbReference type="NCBI Taxonomy" id="595496"/>
    <lineage>
        <taxon>Bacteria</taxon>
        <taxon>Pseudomonadati</taxon>
        <taxon>Pseudomonadota</taxon>
        <taxon>Gammaproteobacteria</taxon>
        <taxon>Enterobacterales</taxon>
        <taxon>Enterobacteriaceae</taxon>
        <taxon>Escherichia</taxon>
    </lineage>
</organism>
<gene>
    <name evidence="1" type="primary">purA</name>
    <name type="ordered locus">BWG_3889</name>
</gene>
<proteinExistence type="inferred from homology"/>